<protein>
    <recommendedName>
        <fullName evidence="1">ATP-dependent zinc metalloprotease FtsH</fullName>
        <ecNumber evidence="1">3.4.24.-</ecNumber>
    </recommendedName>
</protein>
<dbReference type="EC" id="3.4.24.-" evidence="1"/>
<dbReference type="EMBL" id="AE005174">
    <property type="protein sequence ID" value="AAG58312.1"/>
    <property type="molecule type" value="Genomic_DNA"/>
</dbReference>
<dbReference type="EMBL" id="BA000007">
    <property type="protein sequence ID" value="BAB37480.2"/>
    <property type="status" value="ALT_INIT"/>
    <property type="molecule type" value="Genomic_DNA"/>
</dbReference>
<dbReference type="PIR" id="A98136">
    <property type="entry name" value="A98136"/>
</dbReference>
<dbReference type="PIR" id="D85981">
    <property type="entry name" value="D85981"/>
</dbReference>
<dbReference type="RefSeq" id="NP_312084.1">
    <property type="nucleotide sequence ID" value="NC_002695.1"/>
</dbReference>
<dbReference type="RefSeq" id="WP_001107466.1">
    <property type="nucleotide sequence ID" value="NZ_VOAI01000014.1"/>
</dbReference>
<dbReference type="SMR" id="Q8X9L0"/>
<dbReference type="STRING" id="155864.Z4540"/>
<dbReference type="MEROPS" id="M41.001"/>
<dbReference type="GeneID" id="916102"/>
<dbReference type="KEGG" id="ece:Z4540"/>
<dbReference type="KEGG" id="ecs:ECs_4057"/>
<dbReference type="PATRIC" id="fig|386585.9.peg.4236"/>
<dbReference type="eggNOG" id="COG0465">
    <property type="taxonomic scope" value="Bacteria"/>
</dbReference>
<dbReference type="HOGENOM" id="CLU_000688_16_2_6"/>
<dbReference type="OMA" id="LFLMNQM"/>
<dbReference type="Proteomes" id="UP000000558">
    <property type="component" value="Chromosome"/>
</dbReference>
<dbReference type="Proteomes" id="UP000002519">
    <property type="component" value="Chromosome"/>
</dbReference>
<dbReference type="GO" id="GO:0005886">
    <property type="term" value="C:plasma membrane"/>
    <property type="evidence" value="ECO:0007669"/>
    <property type="project" value="UniProtKB-SubCell"/>
</dbReference>
<dbReference type="GO" id="GO:0005524">
    <property type="term" value="F:ATP binding"/>
    <property type="evidence" value="ECO:0007669"/>
    <property type="project" value="UniProtKB-UniRule"/>
</dbReference>
<dbReference type="GO" id="GO:0016887">
    <property type="term" value="F:ATP hydrolysis activity"/>
    <property type="evidence" value="ECO:0007669"/>
    <property type="project" value="UniProtKB-UniRule"/>
</dbReference>
<dbReference type="GO" id="GO:0004176">
    <property type="term" value="F:ATP-dependent peptidase activity"/>
    <property type="evidence" value="ECO:0007669"/>
    <property type="project" value="InterPro"/>
</dbReference>
<dbReference type="GO" id="GO:0004222">
    <property type="term" value="F:metalloendopeptidase activity"/>
    <property type="evidence" value="ECO:0007669"/>
    <property type="project" value="InterPro"/>
</dbReference>
<dbReference type="GO" id="GO:0008270">
    <property type="term" value="F:zinc ion binding"/>
    <property type="evidence" value="ECO:0007669"/>
    <property type="project" value="UniProtKB-UniRule"/>
</dbReference>
<dbReference type="GO" id="GO:0030163">
    <property type="term" value="P:protein catabolic process"/>
    <property type="evidence" value="ECO:0007669"/>
    <property type="project" value="UniProtKB-UniRule"/>
</dbReference>
<dbReference type="GO" id="GO:0006508">
    <property type="term" value="P:proteolysis"/>
    <property type="evidence" value="ECO:0007669"/>
    <property type="project" value="UniProtKB-KW"/>
</dbReference>
<dbReference type="CDD" id="cd19501">
    <property type="entry name" value="RecA-like_FtsH"/>
    <property type="match status" value="1"/>
</dbReference>
<dbReference type="FunFam" id="1.10.8.60:FF:000001">
    <property type="entry name" value="ATP-dependent zinc metalloprotease FtsH"/>
    <property type="match status" value="1"/>
</dbReference>
<dbReference type="FunFam" id="1.20.58.760:FF:000001">
    <property type="entry name" value="ATP-dependent zinc metalloprotease FtsH"/>
    <property type="match status" value="1"/>
</dbReference>
<dbReference type="FunFam" id="3.30.720.210:FF:000001">
    <property type="entry name" value="ATP-dependent zinc metalloprotease FtsH"/>
    <property type="match status" value="1"/>
</dbReference>
<dbReference type="FunFam" id="3.40.50.300:FF:000001">
    <property type="entry name" value="ATP-dependent zinc metalloprotease FtsH"/>
    <property type="match status" value="1"/>
</dbReference>
<dbReference type="Gene3D" id="1.10.8.60">
    <property type="match status" value="1"/>
</dbReference>
<dbReference type="Gene3D" id="3.30.720.210">
    <property type="match status" value="1"/>
</dbReference>
<dbReference type="Gene3D" id="3.40.50.300">
    <property type="entry name" value="P-loop containing nucleotide triphosphate hydrolases"/>
    <property type="match status" value="1"/>
</dbReference>
<dbReference type="Gene3D" id="1.20.58.760">
    <property type="entry name" value="Peptidase M41"/>
    <property type="match status" value="1"/>
</dbReference>
<dbReference type="HAMAP" id="MF_01458">
    <property type="entry name" value="FtsH"/>
    <property type="match status" value="1"/>
</dbReference>
<dbReference type="InterPro" id="IPR003593">
    <property type="entry name" value="AAA+_ATPase"/>
</dbReference>
<dbReference type="InterPro" id="IPR041569">
    <property type="entry name" value="AAA_lid_3"/>
</dbReference>
<dbReference type="InterPro" id="IPR003959">
    <property type="entry name" value="ATPase_AAA_core"/>
</dbReference>
<dbReference type="InterPro" id="IPR003960">
    <property type="entry name" value="ATPase_AAA_CS"/>
</dbReference>
<dbReference type="InterPro" id="IPR005936">
    <property type="entry name" value="FtsH"/>
</dbReference>
<dbReference type="InterPro" id="IPR027417">
    <property type="entry name" value="P-loop_NTPase"/>
</dbReference>
<dbReference type="InterPro" id="IPR011546">
    <property type="entry name" value="Pept_M41_FtsH_extracell"/>
</dbReference>
<dbReference type="InterPro" id="IPR000642">
    <property type="entry name" value="Peptidase_M41"/>
</dbReference>
<dbReference type="InterPro" id="IPR037219">
    <property type="entry name" value="Peptidase_M41-like"/>
</dbReference>
<dbReference type="NCBIfam" id="TIGR01241">
    <property type="entry name" value="FtsH_fam"/>
    <property type="match status" value="1"/>
</dbReference>
<dbReference type="NCBIfam" id="NF008004">
    <property type="entry name" value="PRK10733.1"/>
    <property type="match status" value="1"/>
</dbReference>
<dbReference type="PANTHER" id="PTHR23076:SF97">
    <property type="entry name" value="ATP-DEPENDENT ZINC METALLOPROTEASE YME1L1"/>
    <property type="match status" value="1"/>
</dbReference>
<dbReference type="PANTHER" id="PTHR23076">
    <property type="entry name" value="METALLOPROTEASE M41 FTSH"/>
    <property type="match status" value="1"/>
</dbReference>
<dbReference type="Pfam" id="PF00004">
    <property type="entry name" value="AAA"/>
    <property type="match status" value="1"/>
</dbReference>
<dbReference type="Pfam" id="PF17862">
    <property type="entry name" value="AAA_lid_3"/>
    <property type="match status" value="1"/>
</dbReference>
<dbReference type="Pfam" id="PF06480">
    <property type="entry name" value="FtsH_ext"/>
    <property type="match status" value="1"/>
</dbReference>
<dbReference type="Pfam" id="PF01434">
    <property type="entry name" value="Peptidase_M41"/>
    <property type="match status" value="1"/>
</dbReference>
<dbReference type="SMART" id="SM00382">
    <property type="entry name" value="AAA"/>
    <property type="match status" value="1"/>
</dbReference>
<dbReference type="SUPFAM" id="SSF140990">
    <property type="entry name" value="FtsH protease domain-like"/>
    <property type="match status" value="1"/>
</dbReference>
<dbReference type="SUPFAM" id="SSF52540">
    <property type="entry name" value="P-loop containing nucleoside triphosphate hydrolases"/>
    <property type="match status" value="1"/>
</dbReference>
<dbReference type="PROSITE" id="PS00674">
    <property type="entry name" value="AAA"/>
    <property type="match status" value="1"/>
</dbReference>
<evidence type="ECO:0000255" key="1">
    <source>
        <dbReference type="HAMAP-Rule" id="MF_01458"/>
    </source>
</evidence>
<evidence type="ECO:0000256" key="2">
    <source>
        <dbReference type="SAM" id="MobiDB-lite"/>
    </source>
</evidence>
<evidence type="ECO:0000305" key="3"/>
<reference key="1">
    <citation type="journal article" date="2001" name="Nature">
        <title>Genome sequence of enterohaemorrhagic Escherichia coli O157:H7.</title>
        <authorList>
            <person name="Perna N.T."/>
            <person name="Plunkett G. III"/>
            <person name="Burland V."/>
            <person name="Mau B."/>
            <person name="Glasner J.D."/>
            <person name="Rose D.J."/>
            <person name="Mayhew G.F."/>
            <person name="Evans P.S."/>
            <person name="Gregor J."/>
            <person name="Kirkpatrick H.A."/>
            <person name="Posfai G."/>
            <person name="Hackett J."/>
            <person name="Klink S."/>
            <person name="Boutin A."/>
            <person name="Shao Y."/>
            <person name="Miller L."/>
            <person name="Grotbeck E.J."/>
            <person name="Davis N.W."/>
            <person name="Lim A."/>
            <person name="Dimalanta E.T."/>
            <person name="Potamousis K."/>
            <person name="Apodaca J."/>
            <person name="Anantharaman T.S."/>
            <person name="Lin J."/>
            <person name="Yen G."/>
            <person name="Schwartz D.C."/>
            <person name="Welch R.A."/>
            <person name="Blattner F.R."/>
        </authorList>
    </citation>
    <scope>NUCLEOTIDE SEQUENCE [LARGE SCALE GENOMIC DNA]</scope>
    <source>
        <strain>O157:H7 / EDL933 / ATCC 700927 / EHEC</strain>
    </source>
</reference>
<reference key="2">
    <citation type="journal article" date="2001" name="DNA Res.">
        <title>Complete genome sequence of enterohemorrhagic Escherichia coli O157:H7 and genomic comparison with a laboratory strain K-12.</title>
        <authorList>
            <person name="Hayashi T."/>
            <person name="Makino K."/>
            <person name="Ohnishi M."/>
            <person name="Kurokawa K."/>
            <person name="Ishii K."/>
            <person name="Yokoyama K."/>
            <person name="Han C.-G."/>
            <person name="Ohtsubo E."/>
            <person name="Nakayama K."/>
            <person name="Murata T."/>
            <person name="Tanaka M."/>
            <person name="Tobe T."/>
            <person name="Iida T."/>
            <person name="Takami H."/>
            <person name="Honda T."/>
            <person name="Sasakawa C."/>
            <person name="Ogasawara N."/>
            <person name="Yasunaga T."/>
            <person name="Kuhara S."/>
            <person name="Shiba T."/>
            <person name="Hattori M."/>
            <person name="Shinagawa H."/>
        </authorList>
    </citation>
    <scope>NUCLEOTIDE SEQUENCE [LARGE SCALE GENOMIC DNA]</scope>
    <source>
        <strain>O157:H7 / Sakai / RIMD 0509952 / EHEC</strain>
    </source>
</reference>
<organism>
    <name type="scientific">Escherichia coli O157:H7</name>
    <dbReference type="NCBI Taxonomy" id="83334"/>
    <lineage>
        <taxon>Bacteria</taxon>
        <taxon>Pseudomonadati</taxon>
        <taxon>Pseudomonadota</taxon>
        <taxon>Gammaproteobacteria</taxon>
        <taxon>Enterobacterales</taxon>
        <taxon>Enterobacteriaceae</taxon>
        <taxon>Escherichia</taxon>
    </lineage>
</organism>
<name>FTSH_ECO57</name>
<proteinExistence type="inferred from homology"/>
<gene>
    <name evidence="1" type="primary">ftsH</name>
    <name type="synonym">hflB</name>
    <name type="ordered locus">Z4540</name>
    <name type="ordered locus">ECs4057</name>
</gene>
<feature type="chain" id="PRO_0000084632" description="ATP-dependent zinc metalloprotease FtsH">
    <location>
        <begin position="1"/>
        <end position="644"/>
    </location>
</feature>
<feature type="topological domain" description="Cytoplasmic" evidence="1">
    <location>
        <begin position="1"/>
        <end position="4"/>
    </location>
</feature>
<feature type="transmembrane region" description="Helical" evidence="1">
    <location>
        <begin position="5"/>
        <end position="25"/>
    </location>
</feature>
<feature type="topological domain" description="Periplasmic" evidence="1">
    <location>
        <begin position="26"/>
        <end position="98"/>
    </location>
</feature>
<feature type="transmembrane region" description="Helical" evidence="1">
    <location>
        <begin position="99"/>
        <end position="119"/>
    </location>
</feature>
<feature type="topological domain" description="Cytoplasmic" evidence="1">
    <location>
        <begin position="120"/>
        <end position="644"/>
    </location>
</feature>
<feature type="region of interest" description="Disordered" evidence="2">
    <location>
        <begin position="598"/>
        <end position="644"/>
    </location>
</feature>
<feature type="compositionally biased region" description="Polar residues" evidence="2">
    <location>
        <begin position="632"/>
        <end position="644"/>
    </location>
</feature>
<feature type="active site" evidence="1">
    <location>
        <position position="415"/>
    </location>
</feature>
<feature type="binding site" evidence="1">
    <location>
        <begin position="192"/>
        <end position="199"/>
    </location>
    <ligand>
        <name>ATP</name>
        <dbReference type="ChEBI" id="CHEBI:30616"/>
    </ligand>
</feature>
<feature type="binding site" evidence="1">
    <location>
        <position position="414"/>
    </location>
    <ligand>
        <name>Zn(2+)</name>
        <dbReference type="ChEBI" id="CHEBI:29105"/>
        <note>catalytic</note>
    </ligand>
</feature>
<feature type="binding site" evidence="1">
    <location>
        <position position="418"/>
    </location>
    <ligand>
        <name>Zn(2+)</name>
        <dbReference type="ChEBI" id="CHEBI:29105"/>
        <note>catalytic</note>
    </ligand>
</feature>
<feature type="binding site" evidence="1">
    <location>
        <position position="492"/>
    </location>
    <ligand>
        <name>Zn(2+)</name>
        <dbReference type="ChEBI" id="CHEBI:29105"/>
        <note>catalytic</note>
    </ligand>
</feature>
<comment type="function">
    <text evidence="1">Acts as a processive, ATP-dependent zinc metallopeptidase for both cytoplasmic and membrane proteins. Plays a role in the quality control of integral membrane proteins.</text>
</comment>
<comment type="cofactor">
    <cofactor evidence="1">
        <name>Zn(2+)</name>
        <dbReference type="ChEBI" id="CHEBI:29105"/>
    </cofactor>
    <text evidence="1">Binds 1 zinc ion per subunit.</text>
</comment>
<comment type="subunit">
    <text evidence="1">Homohexamer.</text>
</comment>
<comment type="subcellular location">
    <subcellularLocation>
        <location evidence="1">Cell inner membrane</location>
        <topology evidence="1">Multi-pass membrane protein</topology>
        <orientation evidence="1">Cytoplasmic side</orientation>
    </subcellularLocation>
</comment>
<comment type="similarity">
    <text evidence="1">In the central section; belongs to the AAA ATPase family.</text>
</comment>
<comment type="similarity">
    <text evidence="1">In the C-terminal section; belongs to the peptidase M41 family.</text>
</comment>
<comment type="sequence caution" evidence="3">
    <conflict type="erroneous initiation">
        <sequence resource="EMBL-CDS" id="BAB37480"/>
    </conflict>
    <text>Extended N-terminus.</text>
</comment>
<accession>Q8X9L0</accession>
<sequence length="644" mass="70692">MAKNLILWLVIAVVLMSVFQSFGPSESNGRKVDYSTFLQEVNNDQVREARINGREINVTKKDSNRYTTYIPVQDPKLLDNLLTKNVKVVGEPPEEPSLLASIFISWFPMLLLIGVWIFFMRQMQGGGGKGAMSFGKSKARMLTEDQIKTTFADVAGCDEAKEEVAELVEYLREPSRFQKLGGKIPKGVLMVGPPGTGKTLLAKAIAGEAKVPFFTISGSDFVEMFVGVGASRVRDMFEQAKKAAPCIIFIDEIDAVGRQRGAGLGGGHDEREQTLNQMLVEMDGFEGNEGIIVIAATNRPDVLDPALLRPGRFDRQVVVGLPDVRGREQILKVHMRRVPLAPDIDAAIIARGTPGFSGADLANLVNEAALFAARGNKRVVSMVEFEKAKDKIMMGAERRSMVMTEAQKESTAYHEAGHAIIGRLVPEHDPVHKVTIIPRGRALGVTFFLPEGDAISASRQKLESQISTLYGGRLAEEIIYGPEHVSTGASNDIKVATNLARNMVTQWGFSEKLGPLLYAEEEGEVFLGRSVAKAKHMSDETARIIDQEVKALIERNYNRARQLLTDNMDILHAMKDALMKYETIDAPQIDDLMARRDVRPPAGWEEPGASNNAGDNGSPKAPRPVDEPRTPNPGNTMSEQLGDK</sequence>
<keyword id="KW-0067">ATP-binding</keyword>
<keyword id="KW-0997">Cell inner membrane</keyword>
<keyword id="KW-1003">Cell membrane</keyword>
<keyword id="KW-0378">Hydrolase</keyword>
<keyword id="KW-0472">Membrane</keyword>
<keyword id="KW-0479">Metal-binding</keyword>
<keyword id="KW-0482">Metalloprotease</keyword>
<keyword id="KW-0547">Nucleotide-binding</keyword>
<keyword id="KW-0645">Protease</keyword>
<keyword id="KW-1185">Reference proteome</keyword>
<keyword id="KW-0812">Transmembrane</keyword>
<keyword id="KW-1133">Transmembrane helix</keyword>
<keyword id="KW-0862">Zinc</keyword>